<protein>
    <recommendedName>
        <fullName evidence="1">Polyribonucleotide nucleotidyltransferase</fullName>
        <ecNumber evidence="1">2.7.7.8</ecNumber>
    </recommendedName>
    <alternativeName>
        <fullName evidence="1">Polynucleotide phosphorylase</fullName>
        <shortName evidence="1">PNPase</shortName>
    </alternativeName>
</protein>
<accession>Q7U515</accession>
<organism>
    <name type="scientific">Parasynechococcus marenigrum (strain WH8102)</name>
    <dbReference type="NCBI Taxonomy" id="84588"/>
    <lineage>
        <taxon>Bacteria</taxon>
        <taxon>Bacillati</taxon>
        <taxon>Cyanobacteriota</taxon>
        <taxon>Cyanophyceae</taxon>
        <taxon>Synechococcales</taxon>
        <taxon>Prochlorococcaceae</taxon>
        <taxon>Parasynechococcus</taxon>
        <taxon>Parasynechococcus marenigrum</taxon>
    </lineage>
</organism>
<name>PNP_PARMW</name>
<dbReference type="EC" id="2.7.7.8" evidence="1"/>
<dbReference type="EMBL" id="BX569694">
    <property type="protein sequence ID" value="CAE08412.1"/>
    <property type="molecule type" value="Genomic_DNA"/>
</dbReference>
<dbReference type="RefSeq" id="WP_011128755.1">
    <property type="nucleotide sequence ID" value="NC_005070.1"/>
</dbReference>
<dbReference type="SMR" id="Q7U515"/>
<dbReference type="STRING" id="84588.SYNW1897"/>
<dbReference type="KEGG" id="syw:SYNW1897"/>
<dbReference type="eggNOG" id="COG1185">
    <property type="taxonomic scope" value="Bacteria"/>
</dbReference>
<dbReference type="HOGENOM" id="CLU_004217_2_2_3"/>
<dbReference type="Proteomes" id="UP000001422">
    <property type="component" value="Chromosome"/>
</dbReference>
<dbReference type="GO" id="GO:0005829">
    <property type="term" value="C:cytosol"/>
    <property type="evidence" value="ECO:0007669"/>
    <property type="project" value="TreeGrafter"/>
</dbReference>
<dbReference type="GO" id="GO:0000175">
    <property type="term" value="F:3'-5'-RNA exonuclease activity"/>
    <property type="evidence" value="ECO:0007669"/>
    <property type="project" value="TreeGrafter"/>
</dbReference>
<dbReference type="GO" id="GO:0000287">
    <property type="term" value="F:magnesium ion binding"/>
    <property type="evidence" value="ECO:0007669"/>
    <property type="project" value="UniProtKB-UniRule"/>
</dbReference>
<dbReference type="GO" id="GO:0004654">
    <property type="term" value="F:polyribonucleotide nucleotidyltransferase activity"/>
    <property type="evidence" value="ECO:0007669"/>
    <property type="project" value="UniProtKB-UniRule"/>
</dbReference>
<dbReference type="GO" id="GO:0003723">
    <property type="term" value="F:RNA binding"/>
    <property type="evidence" value="ECO:0007669"/>
    <property type="project" value="UniProtKB-UniRule"/>
</dbReference>
<dbReference type="GO" id="GO:0006402">
    <property type="term" value="P:mRNA catabolic process"/>
    <property type="evidence" value="ECO:0007669"/>
    <property type="project" value="UniProtKB-UniRule"/>
</dbReference>
<dbReference type="GO" id="GO:0006396">
    <property type="term" value="P:RNA processing"/>
    <property type="evidence" value="ECO:0007669"/>
    <property type="project" value="InterPro"/>
</dbReference>
<dbReference type="CDD" id="cd02393">
    <property type="entry name" value="KH-I_PNPase"/>
    <property type="match status" value="1"/>
</dbReference>
<dbReference type="CDD" id="cd11363">
    <property type="entry name" value="RNase_PH_PNPase_1"/>
    <property type="match status" value="1"/>
</dbReference>
<dbReference type="CDD" id="cd11364">
    <property type="entry name" value="RNase_PH_PNPase_2"/>
    <property type="match status" value="1"/>
</dbReference>
<dbReference type="FunFam" id="2.40.50.140:FF:000023">
    <property type="entry name" value="Polyribonucleotide nucleotidyltransferase"/>
    <property type="match status" value="1"/>
</dbReference>
<dbReference type="FunFam" id="3.30.1370.10:FF:000001">
    <property type="entry name" value="Polyribonucleotide nucleotidyltransferase"/>
    <property type="match status" value="1"/>
</dbReference>
<dbReference type="FunFam" id="3.30.230.70:FF:000001">
    <property type="entry name" value="Polyribonucleotide nucleotidyltransferase"/>
    <property type="match status" value="1"/>
</dbReference>
<dbReference type="FunFam" id="3.30.230.70:FF:000002">
    <property type="entry name" value="Polyribonucleotide nucleotidyltransferase"/>
    <property type="match status" value="1"/>
</dbReference>
<dbReference type="Gene3D" id="3.30.230.70">
    <property type="entry name" value="GHMP Kinase, N-terminal domain"/>
    <property type="match status" value="2"/>
</dbReference>
<dbReference type="Gene3D" id="3.30.1370.10">
    <property type="entry name" value="K Homology domain, type 1"/>
    <property type="match status" value="1"/>
</dbReference>
<dbReference type="Gene3D" id="2.40.50.140">
    <property type="entry name" value="Nucleic acid-binding proteins"/>
    <property type="match status" value="1"/>
</dbReference>
<dbReference type="HAMAP" id="MF_01595">
    <property type="entry name" value="PNPase"/>
    <property type="match status" value="1"/>
</dbReference>
<dbReference type="InterPro" id="IPR001247">
    <property type="entry name" value="ExoRNase_PH_dom1"/>
</dbReference>
<dbReference type="InterPro" id="IPR015847">
    <property type="entry name" value="ExoRNase_PH_dom2"/>
</dbReference>
<dbReference type="InterPro" id="IPR036345">
    <property type="entry name" value="ExoRNase_PH_dom2_sf"/>
</dbReference>
<dbReference type="InterPro" id="IPR004087">
    <property type="entry name" value="KH_dom"/>
</dbReference>
<dbReference type="InterPro" id="IPR004088">
    <property type="entry name" value="KH_dom_type_1"/>
</dbReference>
<dbReference type="InterPro" id="IPR036612">
    <property type="entry name" value="KH_dom_type_1_sf"/>
</dbReference>
<dbReference type="InterPro" id="IPR012340">
    <property type="entry name" value="NA-bd_OB-fold"/>
</dbReference>
<dbReference type="InterPro" id="IPR012162">
    <property type="entry name" value="PNPase"/>
</dbReference>
<dbReference type="InterPro" id="IPR027408">
    <property type="entry name" value="PNPase/RNase_PH_dom_sf"/>
</dbReference>
<dbReference type="InterPro" id="IPR015848">
    <property type="entry name" value="PNPase_PH_RNA-bd_bac/org-type"/>
</dbReference>
<dbReference type="InterPro" id="IPR020568">
    <property type="entry name" value="Ribosomal_Su5_D2-typ_SF"/>
</dbReference>
<dbReference type="InterPro" id="IPR003029">
    <property type="entry name" value="S1_domain"/>
</dbReference>
<dbReference type="NCBIfam" id="TIGR03591">
    <property type="entry name" value="polynuc_phos"/>
    <property type="match status" value="1"/>
</dbReference>
<dbReference type="NCBIfam" id="NF008805">
    <property type="entry name" value="PRK11824.1"/>
    <property type="match status" value="1"/>
</dbReference>
<dbReference type="PANTHER" id="PTHR11252">
    <property type="entry name" value="POLYRIBONUCLEOTIDE NUCLEOTIDYLTRANSFERASE"/>
    <property type="match status" value="1"/>
</dbReference>
<dbReference type="PANTHER" id="PTHR11252:SF0">
    <property type="entry name" value="POLYRIBONUCLEOTIDE NUCLEOTIDYLTRANSFERASE 1, MITOCHONDRIAL"/>
    <property type="match status" value="1"/>
</dbReference>
<dbReference type="Pfam" id="PF00013">
    <property type="entry name" value="KH_1"/>
    <property type="match status" value="1"/>
</dbReference>
<dbReference type="Pfam" id="PF03726">
    <property type="entry name" value="PNPase"/>
    <property type="match status" value="1"/>
</dbReference>
<dbReference type="Pfam" id="PF01138">
    <property type="entry name" value="RNase_PH"/>
    <property type="match status" value="2"/>
</dbReference>
<dbReference type="Pfam" id="PF03725">
    <property type="entry name" value="RNase_PH_C"/>
    <property type="match status" value="2"/>
</dbReference>
<dbReference type="Pfam" id="PF00575">
    <property type="entry name" value="S1"/>
    <property type="match status" value="1"/>
</dbReference>
<dbReference type="PIRSF" id="PIRSF005499">
    <property type="entry name" value="PNPase"/>
    <property type="match status" value="1"/>
</dbReference>
<dbReference type="SMART" id="SM00322">
    <property type="entry name" value="KH"/>
    <property type="match status" value="1"/>
</dbReference>
<dbReference type="SMART" id="SM00316">
    <property type="entry name" value="S1"/>
    <property type="match status" value="1"/>
</dbReference>
<dbReference type="SUPFAM" id="SSF54791">
    <property type="entry name" value="Eukaryotic type KH-domain (KH-domain type I)"/>
    <property type="match status" value="1"/>
</dbReference>
<dbReference type="SUPFAM" id="SSF50249">
    <property type="entry name" value="Nucleic acid-binding proteins"/>
    <property type="match status" value="1"/>
</dbReference>
<dbReference type="SUPFAM" id="SSF55666">
    <property type="entry name" value="Ribonuclease PH domain 2-like"/>
    <property type="match status" value="2"/>
</dbReference>
<dbReference type="SUPFAM" id="SSF54211">
    <property type="entry name" value="Ribosomal protein S5 domain 2-like"/>
    <property type="match status" value="2"/>
</dbReference>
<dbReference type="PROSITE" id="PS50084">
    <property type="entry name" value="KH_TYPE_1"/>
    <property type="match status" value="1"/>
</dbReference>
<dbReference type="PROSITE" id="PS50126">
    <property type="entry name" value="S1"/>
    <property type="match status" value="1"/>
</dbReference>
<proteinExistence type="inferred from homology"/>
<reference key="1">
    <citation type="journal article" date="2003" name="Nature">
        <title>The genome of a motile marine Synechococcus.</title>
        <authorList>
            <person name="Palenik B."/>
            <person name="Brahamsha B."/>
            <person name="Larimer F.W."/>
            <person name="Land M.L."/>
            <person name="Hauser L."/>
            <person name="Chain P."/>
            <person name="Lamerdin J.E."/>
            <person name="Regala W."/>
            <person name="Allen E.E."/>
            <person name="McCarren J."/>
            <person name="Paulsen I.T."/>
            <person name="Dufresne A."/>
            <person name="Partensky F."/>
            <person name="Webb E.A."/>
            <person name="Waterbury J."/>
        </authorList>
    </citation>
    <scope>NUCLEOTIDE SEQUENCE [LARGE SCALE GENOMIC DNA]</scope>
    <source>
        <strain>WH8102</strain>
    </source>
</reference>
<evidence type="ECO:0000255" key="1">
    <source>
        <dbReference type="HAMAP-Rule" id="MF_01595"/>
    </source>
</evidence>
<evidence type="ECO:0000256" key="2">
    <source>
        <dbReference type="SAM" id="MobiDB-lite"/>
    </source>
</evidence>
<sequence>MQGQTQSISFDGREIRLTTGRFAPQAGGSVLVECGDTAVLVTATRSGGREGIDFLPLICDYEERLYAAGRIPGSYQRREGRPPERATLTARLIDRPMRPLFPAWLRDDLQVVATCLSLDERVPADVLAVTGASIATLLAGIPFNGPMAAVRVGLLGDDFVLNPSYREIERGDLDLIVAGTPDGVVMVEAGGNQLPEQDVIEAIDFGYEAICELIKAQEQLLKDLGIEQVKPETPTQDTTVPAYLEKQCTKAISEVLKKFDQTKDERDKALDAIKAEAAEAIAGLKEDDAIRVATASNSKLLGNSFKALTKTLMRQQILKDGKRVDGRALDEVRAISALAGVLPRRVHGSGLFQRGLTQVLSTATLGTPSDAQEMDDLHPSTEKLYLHHYNFPPYSVGETRPMRSPGRREIGHGALAERAILPVLPAKDTFPYVVRVVSEVLSSNGSTSMGSVCGSTLSLMDAGVPLKAPVSGAAMGLIKEGDDIRILTDIQGIEDFLGDMDFKVAGSEKGITALQMDMKITGLPVKTIAEAINQARPARLHILEKMLEAIDTPREGLSPHAPRLLSFRIDPELIGTVIGPGGRTIKGITERTNTKIDIEDSGIVTIASHDGAAADEAQKIIEGLTRKVNEGEVFSGSITRIIPIGAFVEILPGKEGMIHISQLSEARVEKVEDVVKVGDEVTVRVREIDNRGRINLTLRGVPQSGDGAGEEPQPTPVAPLS</sequence>
<feature type="chain" id="PRO_0000329904" description="Polyribonucleotide nucleotidyltransferase">
    <location>
        <begin position="1"/>
        <end position="721"/>
    </location>
</feature>
<feature type="domain" description="KH" evidence="1">
    <location>
        <begin position="562"/>
        <end position="621"/>
    </location>
</feature>
<feature type="domain" description="S1 motif" evidence="1">
    <location>
        <begin position="631"/>
        <end position="699"/>
    </location>
</feature>
<feature type="region of interest" description="Disordered" evidence="2">
    <location>
        <begin position="698"/>
        <end position="721"/>
    </location>
</feature>
<feature type="binding site" evidence="1">
    <location>
        <position position="495"/>
    </location>
    <ligand>
        <name>Mg(2+)</name>
        <dbReference type="ChEBI" id="CHEBI:18420"/>
    </ligand>
</feature>
<feature type="binding site" evidence="1">
    <location>
        <position position="501"/>
    </location>
    <ligand>
        <name>Mg(2+)</name>
        <dbReference type="ChEBI" id="CHEBI:18420"/>
    </ligand>
</feature>
<comment type="function">
    <text evidence="1">Involved in mRNA degradation. Catalyzes the phosphorolysis of single-stranded polyribonucleotides processively in the 3'- to 5'-direction.</text>
</comment>
<comment type="catalytic activity">
    <reaction evidence="1">
        <text>RNA(n+1) + phosphate = RNA(n) + a ribonucleoside 5'-diphosphate</text>
        <dbReference type="Rhea" id="RHEA:22096"/>
        <dbReference type="Rhea" id="RHEA-COMP:14527"/>
        <dbReference type="Rhea" id="RHEA-COMP:17342"/>
        <dbReference type="ChEBI" id="CHEBI:43474"/>
        <dbReference type="ChEBI" id="CHEBI:57930"/>
        <dbReference type="ChEBI" id="CHEBI:140395"/>
        <dbReference type="EC" id="2.7.7.8"/>
    </reaction>
</comment>
<comment type="cofactor">
    <cofactor evidence="1">
        <name>Mg(2+)</name>
        <dbReference type="ChEBI" id="CHEBI:18420"/>
    </cofactor>
</comment>
<comment type="subcellular location">
    <subcellularLocation>
        <location evidence="1">Cytoplasm</location>
    </subcellularLocation>
</comment>
<comment type="similarity">
    <text evidence="1">Belongs to the polyribonucleotide nucleotidyltransferase family.</text>
</comment>
<gene>
    <name evidence="1" type="primary">pnp</name>
    <name type="ordered locus">SYNW1897</name>
</gene>
<keyword id="KW-0963">Cytoplasm</keyword>
<keyword id="KW-0460">Magnesium</keyword>
<keyword id="KW-0479">Metal-binding</keyword>
<keyword id="KW-0548">Nucleotidyltransferase</keyword>
<keyword id="KW-0694">RNA-binding</keyword>
<keyword id="KW-0808">Transferase</keyword>